<sequence>MEDSMDMDNIAPLRPQNFLFGCELKADKKEYSFKVEDDENEHQLSLRTVSLGASAKDELHVVEAEGINYEGKTIKIALASLKPSVQPTVSLGGFEITPPVILRLKSGSGPVYVSGQHLVALEDLESSDDEDEEHEPSPKNAKRIAPDSASKVPRKKTRLEEEEEDSDEDDDDDEDDDDEDDDEEEEETPVKKTDSTKSKAAQKLNHNGKASALSTTQKTPKTPEQKGKQDTKPQTPKTPKTPLSSEEIKAKMQTYLEKGNVLPKVEVKFANYVKNCFRTENQKVIEDLWKWRQSLKDGK</sequence>
<feature type="chain" id="PRO_0000219485" description="Nucleophosmin">
    <location>
        <begin position="1"/>
        <end position="299"/>
    </location>
</feature>
<feature type="repeat">
    <location>
        <begin position="218"/>
        <end position="220"/>
    </location>
</feature>
<feature type="repeat">
    <location>
        <begin position="221"/>
        <end position="223"/>
    </location>
</feature>
<feature type="repeat">
    <location>
        <begin position="237"/>
        <end position="239"/>
    </location>
</feature>
<feature type="repeat">
    <location>
        <begin position="240"/>
        <end position="242"/>
    </location>
</feature>
<feature type="region of interest" description="Disordered" evidence="3">
    <location>
        <begin position="125"/>
        <end position="247"/>
    </location>
</feature>
<feature type="region of interest" description="4 X 3 AA repeats of K-T-P">
    <location>
        <begin position="218"/>
        <end position="242"/>
    </location>
</feature>
<feature type="short sequence motif" description="Nuclear localization signal" evidence="2">
    <location>
        <begin position="153"/>
        <end position="158"/>
    </location>
</feature>
<feature type="short sequence motif" description="Nuclear localization signal" evidence="2">
    <location>
        <begin position="189"/>
        <end position="195"/>
    </location>
</feature>
<feature type="compositionally biased region" description="Acidic residues" evidence="3">
    <location>
        <begin position="125"/>
        <end position="134"/>
    </location>
</feature>
<feature type="compositionally biased region" description="Acidic residues" evidence="3">
    <location>
        <begin position="160"/>
        <end position="187"/>
    </location>
</feature>
<feature type="compositionally biased region" description="Basic and acidic residues" evidence="3">
    <location>
        <begin position="188"/>
        <end position="197"/>
    </location>
</feature>
<feature type="compositionally biased region" description="Basic and acidic residues" evidence="3">
    <location>
        <begin position="221"/>
        <end position="231"/>
    </location>
</feature>
<feature type="compositionally biased region" description="Low complexity" evidence="3">
    <location>
        <begin position="232"/>
        <end position="242"/>
    </location>
</feature>
<feature type="site" description="Interaction between pentamers">
    <location>
        <position position="57"/>
    </location>
</feature>
<feature type="site" description="Interaction between pentamers">
    <location>
        <position position="82"/>
    </location>
</feature>
<feature type="strand" evidence="6">
    <location>
        <begin position="16"/>
        <end position="25"/>
    </location>
</feature>
<feature type="strand" evidence="6">
    <location>
        <begin position="30"/>
        <end position="33"/>
    </location>
</feature>
<feature type="strand" evidence="6">
    <location>
        <begin position="39"/>
        <end position="51"/>
    </location>
</feature>
<feature type="strand" evidence="6">
    <location>
        <begin position="60"/>
        <end position="67"/>
    </location>
</feature>
<feature type="strand" evidence="6">
    <location>
        <begin position="73"/>
        <end position="82"/>
    </location>
</feature>
<feature type="turn" evidence="6">
    <location>
        <begin position="83"/>
        <end position="85"/>
    </location>
</feature>
<feature type="strand" evidence="6">
    <location>
        <begin position="88"/>
        <end position="96"/>
    </location>
</feature>
<feature type="strand" evidence="6">
    <location>
        <begin position="100"/>
        <end position="107"/>
    </location>
</feature>
<feature type="strand" evidence="6">
    <location>
        <begin position="111"/>
        <end position="120"/>
    </location>
</feature>
<organism>
    <name type="scientific">Xenopus laevis</name>
    <name type="common">African clawed frog</name>
    <dbReference type="NCBI Taxonomy" id="8355"/>
    <lineage>
        <taxon>Eukaryota</taxon>
        <taxon>Metazoa</taxon>
        <taxon>Chordata</taxon>
        <taxon>Craniata</taxon>
        <taxon>Vertebrata</taxon>
        <taxon>Euteleostomi</taxon>
        <taxon>Amphibia</taxon>
        <taxon>Batrachia</taxon>
        <taxon>Anura</taxon>
        <taxon>Pipoidea</taxon>
        <taxon>Pipidae</taxon>
        <taxon>Xenopodinae</taxon>
        <taxon>Xenopus</taxon>
        <taxon>Xenopus</taxon>
    </lineage>
</organism>
<proteinExistence type="evidence at protein level"/>
<gene>
    <name type="primary">npm1</name>
</gene>
<keyword id="KW-0002">3D-structure</keyword>
<keyword id="KW-0143">Chaperone</keyword>
<keyword id="KW-0963">Cytoplasm</keyword>
<keyword id="KW-0539">Nucleus</keyword>
<keyword id="KW-0597">Phosphoprotein</keyword>
<keyword id="KW-1185">Reference proteome</keyword>
<keyword id="KW-0677">Repeat</keyword>
<keyword id="KW-0694">RNA-binding</keyword>
<comment type="function">
    <text evidence="1">Acts as a chaperonin for the core histones H3, H2B and H4. Associated with nucleolar ribonucleoprotein structures and bind single-stranded nucleic acids. It may function in the assembly and/or transport of ribosome. May stimulate endonuclease activity on apurinic/apyrimidinic (AP) double-stranded DNA. May inhibit endonuclease activity on AP single-stranded RNA (By similarity).</text>
</comment>
<comment type="subunit">
    <text evidence="4">Decamer formed by two pentameric rings associated in a head-to-head fashion.</text>
</comment>
<comment type="interaction">
    <interactant intactId="EBI-11607504">
        <id>P07222</id>
    </interactant>
    <interactant intactId="EBI-11607504">
        <id>P07222</id>
        <label>npm1</label>
    </interactant>
    <organismsDiffer>false</organismsDiffer>
    <experiments>2</experiments>
</comment>
<comment type="subcellular location">
    <subcellularLocation>
        <location evidence="1">Cytoplasm</location>
    </subcellularLocation>
    <subcellularLocation>
        <location evidence="1">Nucleus</location>
        <location evidence="1">Nucleoplasm</location>
    </subcellularLocation>
    <subcellularLocation>
        <location evidence="1">Nucleus</location>
        <location evidence="1">Nucleolus</location>
    </subcellularLocation>
</comment>
<comment type="PTM">
    <text evidence="1">Phosphorylated.</text>
</comment>
<comment type="similarity">
    <text evidence="5">Belongs to the nucleoplasmin family.</text>
</comment>
<name>NPM_XENLA</name>
<protein>
    <recommendedName>
        <fullName>Nucleophosmin</fullName>
        <shortName>NPM</shortName>
    </recommendedName>
    <alternativeName>
        <fullName>Nucleolar phosphoprotein B23</fullName>
    </alternativeName>
    <alternativeName>
        <fullName>Nucleolar protein NO38</fullName>
    </alternativeName>
    <alternativeName>
        <fullName>Numatrin</fullName>
    </alternativeName>
</protein>
<reference key="1">
    <citation type="journal article" date="1987" name="EMBO J.">
        <title>A constitutive nucleolar protein identified as a member of the nucleoplasmin family.</title>
        <authorList>
            <person name="Schmidt-Zachmann M.S."/>
            <person name="Huegle-Doerr B."/>
            <person name="Franke W.W."/>
        </authorList>
    </citation>
    <scope>NUCLEOTIDE SEQUENCE [MRNA]</scope>
    <source>
        <tissue>Ovary</tissue>
    </source>
</reference>
<reference key="2">
    <citation type="journal article" date="2004" name="Structure">
        <title>The structure and function of Xenopus NO38-core, a histone chaperone in the nucleolus.</title>
        <authorList>
            <person name="Namboodiri V.M."/>
            <person name="Akey I.V."/>
            <person name="Schmidt-Zachmann M.S."/>
            <person name="Head J.F."/>
            <person name="Akey C.W."/>
        </authorList>
    </citation>
    <scope>X-RAY CRYSTALLOGRAPHY (1.7 ANGSTROMS) OF 16-124</scope>
    <scope>SUBUNIT</scope>
</reference>
<accession>P07222</accession>
<evidence type="ECO:0000250" key="1"/>
<evidence type="ECO:0000255" key="2"/>
<evidence type="ECO:0000256" key="3">
    <source>
        <dbReference type="SAM" id="MobiDB-lite"/>
    </source>
</evidence>
<evidence type="ECO:0000269" key="4">
    <source>
    </source>
</evidence>
<evidence type="ECO:0000305" key="5"/>
<evidence type="ECO:0007829" key="6">
    <source>
        <dbReference type="PDB" id="1XE0"/>
    </source>
</evidence>
<dbReference type="EMBL" id="X05496">
    <property type="protein sequence ID" value="CAA29046.1"/>
    <property type="molecule type" value="mRNA"/>
</dbReference>
<dbReference type="PIR" id="A29681">
    <property type="entry name" value="A29681"/>
</dbReference>
<dbReference type="PDB" id="1XB9">
    <property type="method" value="X-ray"/>
    <property type="resolution" value="1.90 A"/>
    <property type="chains" value="A/B/C/D/E/F/G/H/I/J=16-124"/>
</dbReference>
<dbReference type="PDB" id="1XE0">
    <property type="method" value="X-ray"/>
    <property type="resolution" value="1.70 A"/>
    <property type="chains" value="A/B/C/D/E/F/G/H/I/J=16-124"/>
</dbReference>
<dbReference type="PDBsum" id="1XB9"/>
<dbReference type="PDBsum" id="1XE0"/>
<dbReference type="SMR" id="P07222"/>
<dbReference type="DIP" id="DIP-48469N"/>
<dbReference type="IntAct" id="P07222">
    <property type="interactions" value="1"/>
</dbReference>
<dbReference type="AGR" id="Xenbase:XB-GENE-1019578"/>
<dbReference type="Xenbase" id="XB-GENE-1019578">
    <property type="gene designation" value="npm1.S"/>
</dbReference>
<dbReference type="CD-CODE" id="403A9DB1">
    <property type="entry name" value="Synthetic Condensate 000002"/>
</dbReference>
<dbReference type="CD-CODE" id="78E86D56">
    <property type="entry name" value="Mitochondrial cloud"/>
</dbReference>
<dbReference type="CD-CODE" id="AC502520">
    <property type="entry name" value="Nucleolus"/>
</dbReference>
<dbReference type="EvolutionaryTrace" id="P07222"/>
<dbReference type="Proteomes" id="UP000186698">
    <property type="component" value="Unplaced"/>
</dbReference>
<dbReference type="GO" id="GO:0005813">
    <property type="term" value="C:centrosome"/>
    <property type="evidence" value="ECO:0000318"/>
    <property type="project" value="GO_Central"/>
</dbReference>
<dbReference type="GO" id="GO:0005737">
    <property type="term" value="C:cytoplasm"/>
    <property type="evidence" value="ECO:0000318"/>
    <property type="project" value="GO_Central"/>
</dbReference>
<dbReference type="GO" id="GO:0005730">
    <property type="term" value="C:nucleolus"/>
    <property type="evidence" value="ECO:0000250"/>
    <property type="project" value="UniProtKB"/>
</dbReference>
<dbReference type="GO" id="GO:0005654">
    <property type="term" value="C:nucleoplasm"/>
    <property type="evidence" value="ECO:0000318"/>
    <property type="project" value="GO_Central"/>
</dbReference>
<dbReference type="GO" id="GO:1990904">
    <property type="term" value="C:ribonucleoprotein complex"/>
    <property type="evidence" value="ECO:0000318"/>
    <property type="project" value="GO_Central"/>
</dbReference>
<dbReference type="GO" id="GO:0003682">
    <property type="term" value="F:chromatin binding"/>
    <property type="evidence" value="ECO:0000318"/>
    <property type="project" value="GO_Central"/>
</dbReference>
<dbReference type="GO" id="GO:0042393">
    <property type="term" value="F:histone binding"/>
    <property type="evidence" value="ECO:0000318"/>
    <property type="project" value="GO_Central"/>
</dbReference>
<dbReference type="GO" id="GO:0042802">
    <property type="term" value="F:identical protein binding"/>
    <property type="evidence" value="ECO:0000353"/>
    <property type="project" value="IntAct"/>
</dbReference>
<dbReference type="GO" id="GO:0003723">
    <property type="term" value="F:RNA binding"/>
    <property type="evidence" value="ECO:0000318"/>
    <property type="project" value="GO_Central"/>
</dbReference>
<dbReference type="GO" id="GO:0006338">
    <property type="term" value="P:chromatin remodeling"/>
    <property type="evidence" value="ECO:0000318"/>
    <property type="project" value="GO_Central"/>
</dbReference>
<dbReference type="GO" id="GO:0006281">
    <property type="term" value="P:DNA repair"/>
    <property type="evidence" value="ECO:0000250"/>
    <property type="project" value="UniProtKB"/>
</dbReference>
<dbReference type="GO" id="GO:0045944">
    <property type="term" value="P:positive regulation of transcription by RNA polymerase II"/>
    <property type="evidence" value="ECO:0000318"/>
    <property type="project" value="GO_Central"/>
</dbReference>
<dbReference type="GO" id="GO:0010824">
    <property type="term" value="P:regulation of centrosome duplication"/>
    <property type="evidence" value="ECO:0000318"/>
    <property type="project" value="GO_Central"/>
</dbReference>
<dbReference type="GO" id="GO:0032071">
    <property type="term" value="P:regulation of endodeoxyribonuclease activity"/>
    <property type="evidence" value="ECO:0000250"/>
    <property type="project" value="UniProtKB"/>
</dbReference>
<dbReference type="GO" id="GO:0060699">
    <property type="term" value="P:regulation of endoribonuclease activity"/>
    <property type="evidence" value="ECO:0000250"/>
    <property type="project" value="UniProtKB"/>
</dbReference>
<dbReference type="GO" id="GO:0042273">
    <property type="term" value="P:ribosomal large subunit biogenesis"/>
    <property type="evidence" value="ECO:0000318"/>
    <property type="project" value="GO_Central"/>
</dbReference>
<dbReference type="GO" id="GO:0000055">
    <property type="term" value="P:ribosomal large subunit export from nucleus"/>
    <property type="evidence" value="ECO:0000318"/>
    <property type="project" value="GO_Central"/>
</dbReference>
<dbReference type="GO" id="GO:0042274">
    <property type="term" value="P:ribosomal small subunit biogenesis"/>
    <property type="evidence" value="ECO:0000318"/>
    <property type="project" value="GO_Central"/>
</dbReference>
<dbReference type="GO" id="GO:0000056">
    <property type="term" value="P:ribosomal small subunit export from nucleus"/>
    <property type="evidence" value="ECO:0000318"/>
    <property type="project" value="GO_Central"/>
</dbReference>
<dbReference type="FunFam" id="2.60.120.340:FF:000017">
    <property type="entry name" value="Nucleophosmin (Nucleolar phosphoprotein B23, numatrin)"/>
    <property type="match status" value="1"/>
</dbReference>
<dbReference type="FunFam" id="1.10.10.2100:FF:000001">
    <property type="entry name" value="Nucleophosmin 1"/>
    <property type="match status" value="1"/>
</dbReference>
<dbReference type="Gene3D" id="1.10.10.2100">
    <property type="match status" value="1"/>
</dbReference>
<dbReference type="Gene3D" id="2.60.120.340">
    <property type="entry name" value="Nucleoplasmin core domain"/>
    <property type="match status" value="1"/>
</dbReference>
<dbReference type="InterPro" id="IPR032569">
    <property type="entry name" value="NPM1_C"/>
</dbReference>
<dbReference type="InterPro" id="IPR004301">
    <property type="entry name" value="Nucleoplasmin"/>
</dbReference>
<dbReference type="InterPro" id="IPR024057">
    <property type="entry name" value="Nucleoplasmin_core_dom"/>
</dbReference>
<dbReference type="InterPro" id="IPR036824">
    <property type="entry name" value="Nucleoplasmin_core_dom_sf"/>
</dbReference>
<dbReference type="PANTHER" id="PTHR22747:SF28">
    <property type="entry name" value="NUCLEOPHOSMIN"/>
    <property type="match status" value="1"/>
</dbReference>
<dbReference type="PANTHER" id="PTHR22747">
    <property type="entry name" value="NUCLEOPLASMIN"/>
    <property type="match status" value="1"/>
</dbReference>
<dbReference type="Pfam" id="PF16276">
    <property type="entry name" value="NPM1-C"/>
    <property type="match status" value="1"/>
</dbReference>
<dbReference type="Pfam" id="PF03066">
    <property type="entry name" value="Nucleoplasmin"/>
    <property type="match status" value="1"/>
</dbReference>
<dbReference type="SUPFAM" id="SSF69203">
    <property type="entry name" value="Nucleoplasmin-like core domain"/>
    <property type="match status" value="1"/>
</dbReference>